<name>TX32B_CYRHA</name>
<accession>D2Y2B7</accession>
<keyword id="KW-1015">Disulfide bond</keyword>
<keyword id="KW-0872">Ion channel impairing toxin</keyword>
<keyword id="KW-0960">Knottin</keyword>
<keyword id="KW-0964">Secreted</keyword>
<keyword id="KW-0732">Signal</keyword>
<keyword id="KW-0800">Toxin</keyword>
<organism>
    <name type="scientific">Cyriopagopus hainanus</name>
    <name type="common">Chinese bird spider</name>
    <name type="synonym">Haplopelma hainanum</name>
    <dbReference type="NCBI Taxonomy" id="209901"/>
    <lineage>
        <taxon>Eukaryota</taxon>
        <taxon>Metazoa</taxon>
        <taxon>Ecdysozoa</taxon>
        <taxon>Arthropoda</taxon>
        <taxon>Chelicerata</taxon>
        <taxon>Arachnida</taxon>
        <taxon>Araneae</taxon>
        <taxon>Mygalomorphae</taxon>
        <taxon>Theraphosidae</taxon>
        <taxon>Haplopelma</taxon>
    </lineage>
</organism>
<dbReference type="EMBL" id="GU292994">
    <property type="protein sequence ID" value="ADB56810.1"/>
    <property type="molecule type" value="mRNA"/>
</dbReference>
<dbReference type="SMR" id="D2Y2B7"/>
<dbReference type="ArachnoServer" id="AS001729">
    <property type="toxin name" value="U10-theraphotoxin-Hhn1a"/>
</dbReference>
<dbReference type="GO" id="GO:0005576">
    <property type="term" value="C:extracellular region"/>
    <property type="evidence" value="ECO:0007669"/>
    <property type="project" value="UniProtKB-SubCell"/>
</dbReference>
<dbReference type="GO" id="GO:0099106">
    <property type="term" value="F:ion channel regulator activity"/>
    <property type="evidence" value="ECO:0007669"/>
    <property type="project" value="UniProtKB-KW"/>
</dbReference>
<dbReference type="GO" id="GO:0090729">
    <property type="term" value="F:toxin activity"/>
    <property type="evidence" value="ECO:0007669"/>
    <property type="project" value="UniProtKB-KW"/>
</dbReference>
<proteinExistence type="evidence at transcript level"/>
<protein>
    <recommendedName>
        <fullName>Hainantoxin-XV.2</fullName>
        <shortName>HNTX-XV.2</shortName>
    </recommendedName>
</protein>
<reference key="1">
    <citation type="journal article" date="2010" name="J. Proteome Res.">
        <title>Molecular diversification of peptide toxins from the tarantula Haplopelma hainanum (Ornithoctonus hainana) venom based on transcriptomic, peptidomic, and genomic analyses.</title>
        <authorList>
            <person name="Tang X."/>
            <person name="Zhang Y."/>
            <person name="Hu W."/>
            <person name="Xu D."/>
            <person name="Tao H."/>
            <person name="Yang X."/>
            <person name="Li Y."/>
            <person name="Jiang L."/>
            <person name="Liang S."/>
        </authorList>
    </citation>
    <scope>NUCLEOTIDE SEQUENCE [LARGE SCALE MRNA]</scope>
    <source>
        <tissue>Venom gland</tissue>
    </source>
</reference>
<evidence type="ECO:0000250" key="1"/>
<evidence type="ECO:0000255" key="2"/>
<evidence type="ECO:0000256" key="3">
    <source>
        <dbReference type="SAM" id="MobiDB-lite"/>
    </source>
</evidence>
<evidence type="ECO:0000305" key="4"/>
<comment type="function">
    <text>Putative ion channel inhibitor.</text>
</comment>
<comment type="subcellular location">
    <subcellularLocation>
        <location evidence="1">Secreted</location>
    </subcellularLocation>
</comment>
<comment type="tissue specificity">
    <text>Expressed by the venom gland.</text>
</comment>
<comment type="domain">
    <text evidence="4">The presence of a 'disulfide through disulfide knot' structurally defines this protein as a knottin.</text>
</comment>
<comment type="similarity">
    <text>Belongs to the neurotoxin 03 (Tx2) family. 02 subfamily. HNTX-XV sub-subfamily.</text>
</comment>
<feature type="signal peptide" evidence="2">
    <location>
        <begin position="1"/>
        <end position="20"/>
    </location>
</feature>
<feature type="propeptide" id="PRO_0000401017" evidence="1">
    <location>
        <begin position="21"/>
        <end position="56"/>
    </location>
</feature>
<feature type="peptide" id="PRO_0000401018" description="Hainantoxin-XV.2">
    <location>
        <begin position="57"/>
        <end position="117"/>
    </location>
</feature>
<feature type="region of interest" description="Disordered" evidence="3">
    <location>
        <begin position="18"/>
        <end position="55"/>
    </location>
</feature>
<feature type="compositionally biased region" description="Basic and acidic residues" evidence="3">
    <location>
        <begin position="23"/>
        <end position="55"/>
    </location>
</feature>
<feature type="disulfide bond" evidence="4">
    <location>
        <begin position="58"/>
        <end position="72"/>
    </location>
</feature>
<feature type="disulfide bond" evidence="4">
    <location>
        <begin position="65"/>
        <end position="78"/>
    </location>
</feature>
<feature type="disulfide bond" evidence="4">
    <location>
        <begin position="69"/>
        <end position="115"/>
    </location>
</feature>
<feature type="disulfide bond" evidence="4">
    <location>
        <begin position="71"/>
        <end position="91"/>
    </location>
</feature>
<sequence length="117" mass="13019">MKLCAVIIASLLVCAAVASSSDNQKEFAQEKEMTREETQSLGEHEKDDEVTGSEERSCIEEWKTCENDCECCGMSTLCAASWVDGHQIKLCRNEGGKLKKVLHFIQKSVSKIKSCKK</sequence>